<protein>
    <recommendedName>
        <fullName>Uncharacterized protein ycf19</fullName>
    </recommendedName>
</protein>
<geneLocation type="chloroplast"/>
<dbReference type="EMBL" id="U38804">
    <property type="protein sequence ID" value="AAC08239.1"/>
    <property type="molecule type" value="Genomic_DNA"/>
</dbReference>
<dbReference type="PIR" id="S73274">
    <property type="entry name" value="S73274"/>
</dbReference>
<dbReference type="RefSeq" id="NP_053963.1">
    <property type="nucleotide sequence ID" value="NC_000925.1"/>
</dbReference>
<dbReference type="SMR" id="P51353"/>
<dbReference type="GeneID" id="809989"/>
<dbReference type="GO" id="GO:0009507">
    <property type="term" value="C:chloroplast"/>
    <property type="evidence" value="ECO:0007669"/>
    <property type="project" value="UniProtKB-SubCell"/>
</dbReference>
<dbReference type="GO" id="GO:0016020">
    <property type="term" value="C:membrane"/>
    <property type="evidence" value="ECO:0007669"/>
    <property type="project" value="InterPro"/>
</dbReference>
<dbReference type="GO" id="GO:0010020">
    <property type="term" value="P:chloroplast fission"/>
    <property type="evidence" value="ECO:0007669"/>
    <property type="project" value="TreeGrafter"/>
</dbReference>
<dbReference type="GO" id="GO:0090143">
    <property type="term" value="P:nucleoid organization"/>
    <property type="evidence" value="ECO:0007669"/>
    <property type="project" value="TreeGrafter"/>
</dbReference>
<dbReference type="InterPro" id="IPR003425">
    <property type="entry name" value="CCB3/YggT"/>
</dbReference>
<dbReference type="PANTHER" id="PTHR33219:SF14">
    <property type="entry name" value="PROTEIN COFACTOR ASSEMBLY OF COMPLEX C SUBUNIT B CCB3, CHLOROPLASTIC-RELATED"/>
    <property type="match status" value="1"/>
</dbReference>
<dbReference type="PANTHER" id="PTHR33219">
    <property type="entry name" value="YLMG HOMOLOG PROTEIN 2, CHLOROPLASTIC"/>
    <property type="match status" value="1"/>
</dbReference>
<dbReference type="Pfam" id="PF02325">
    <property type="entry name" value="YGGT"/>
    <property type="match status" value="1"/>
</dbReference>
<feature type="chain" id="PRO_0000217322" description="Uncharacterized protein ycf19">
    <location>
        <begin position="1"/>
        <end position="95"/>
    </location>
</feature>
<sequence length="95" mass="10832">MNTLPGTLNLLLGSIANFSEIYLILILLKLSLAWFPTVNWYNEPFCSLNRITDPYLKLFRGSIPPMFGMDMSPMLGIIFLQCLMVIFNNVRLESA</sequence>
<evidence type="ECO:0000305" key="1"/>
<gene>
    <name type="primary">ycf19</name>
</gene>
<accession>P51353</accession>
<keyword id="KW-0150">Chloroplast</keyword>
<keyword id="KW-0934">Plastid</keyword>
<reference key="1">
    <citation type="journal article" date="1995" name="Plant Mol. Biol. Rep.">
        <title>Complete nucleotide sequence of the Porphyra purpurea chloroplast genome.</title>
        <authorList>
            <person name="Reith M.E."/>
            <person name="Munholland J."/>
        </authorList>
    </citation>
    <scope>NUCLEOTIDE SEQUENCE [LARGE SCALE GENOMIC DNA]</scope>
    <source>
        <strain>Avonport</strain>
    </source>
</reference>
<proteinExistence type="inferred from homology"/>
<comment type="subcellular location">
    <subcellularLocation>
        <location>Plastid</location>
        <location>Chloroplast</location>
    </subcellularLocation>
</comment>
<comment type="similarity">
    <text evidence="1">Belongs to the ycf19 family.</text>
</comment>
<organism>
    <name type="scientific">Porphyra purpurea</name>
    <name type="common">Red seaweed</name>
    <name type="synonym">Ulva purpurea</name>
    <dbReference type="NCBI Taxonomy" id="2787"/>
    <lineage>
        <taxon>Eukaryota</taxon>
        <taxon>Rhodophyta</taxon>
        <taxon>Bangiophyceae</taxon>
        <taxon>Bangiales</taxon>
        <taxon>Bangiaceae</taxon>
        <taxon>Porphyra</taxon>
    </lineage>
</organism>
<name>YCF19_PORPU</name>